<proteinExistence type="inferred from homology"/>
<evidence type="ECO:0000255" key="1">
    <source>
        <dbReference type="HAMAP-Rule" id="MF_00518"/>
    </source>
</evidence>
<organism>
    <name type="scientific">Clostridium kluyveri (strain ATCC 8527 / DSM 555 / NBRC 12016 / NCIMB 10680 / K1)</name>
    <dbReference type="NCBI Taxonomy" id="431943"/>
    <lineage>
        <taxon>Bacteria</taxon>
        <taxon>Bacillati</taxon>
        <taxon>Bacillota</taxon>
        <taxon>Clostridia</taxon>
        <taxon>Eubacteriales</taxon>
        <taxon>Clostridiaceae</taxon>
        <taxon>Clostridium</taxon>
    </lineage>
</organism>
<accession>A5N1Z2</accession>
<feature type="chain" id="PRO_1000081647" description="D-aminoacyl-tRNA deacylase">
    <location>
        <begin position="1"/>
        <end position="149"/>
    </location>
</feature>
<feature type="short sequence motif" description="Gly-cisPro motif, important for rejection of L-amino acids" evidence="1">
    <location>
        <begin position="137"/>
        <end position="138"/>
    </location>
</feature>
<name>DTD_CLOK5</name>
<keyword id="KW-0963">Cytoplasm</keyword>
<keyword id="KW-0378">Hydrolase</keyword>
<keyword id="KW-1185">Reference proteome</keyword>
<keyword id="KW-0694">RNA-binding</keyword>
<keyword id="KW-0820">tRNA-binding</keyword>
<protein>
    <recommendedName>
        <fullName evidence="1">D-aminoacyl-tRNA deacylase</fullName>
        <shortName evidence="1">DTD</shortName>
        <ecNumber evidence="1">3.1.1.96</ecNumber>
    </recommendedName>
    <alternativeName>
        <fullName evidence="1">Gly-tRNA(Ala) deacylase</fullName>
    </alternativeName>
</protein>
<comment type="function">
    <text evidence="1">An aminoacyl-tRNA editing enzyme that deacylates mischarged D-aminoacyl-tRNAs. Also deacylates mischarged glycyl-tRNA(Ala), protecting cells against glycine mischarging by AlaRS. Acts via tRNA-based rather than protein-based catalysis; rejects L-amino acids rather than detecting D-amino acids in the active site. By recycling D-aminoacyl-tRNA to D-amino acids and free tRNA molecules, this enzyme counteracts the toxicity associated with the formation of D-aminoacyl-tRNA entities in vivo and helps enforce protein L-homochirality.</text>
</comment>
<comment type="catalytic activity">
    <reaction evidence="1">
        <text>glycyl-tRNA(Ala) + H2O = tRNA(Ala) + glycine + H(+)</text>
        <dbReference type="Rhea" id="RHEA:53744"/>
        <dbReference type="Rhea" id="RHEA-COMP:9657"/>
        <dbReference type="Rhea" id="RHEA-COMP:13640"/>
        <dbReference type="ChEBI" id="CHEBI:15377"/>
        <dbReference type="ChEBI" id="CHEBI:15378"/>
        <dbReference type="ChEBI" id="CHEBI:57305"/>
        <dbReference type="ChEBI" id="CHEBI:78442"/>
        <dbReference type="ChEBI" id="CHEBI:78522"/>
        <dbReference type="EC" id="3.1.1.96"/>
    </reaction>
</comment>
<comment type="catalytic activity">
    <reaction evidence="1">
        <text>a D-aminoacyl-tRNA + H2O = a tRNA + a D-alpha-amino acid + H(+)</text>
        <dbReference type="Rhea" id="RHEA:13953"/>
        <dbReference type="Rhea" id="RHEA-COMP:10123"/>
        <dbReference type="Rhea" id="RHEA-COMP:10124"/>
        <dbReference type="ChEBI" id="CHEBI:15377"/>
        <dbReference type="ChEBI" id="CHEBI:15378"/>
        <dbReference type="ChEBI" id="CHEBI:59871"/>
        <dbReference type="ChEBI" id="CHEBI:78442"/>
        <dbReference type="ChEBI" id="CHEBI:79333"/>
        <dbReference type="EC" id="3.1.1.96"/>
    </reaction>
</comment>
<comment type="subunit">
    <text evidence="1">Homodimer.</text>
</comment>
<comment type="subcellular location">
    <subcellularLocation>
        <location evidence="1">Cytoplasm</location>
    </subcellularLocation>
</comment>
<comment type="domain">
    <text evidence="1">A Gly-cisPro motif from one monomer fits into the active site of the other monomer to allow specific chiral rejection of L-amino acids.</text>
</comment>
<comment type="similarity">
    <text evidence="1">Belongs to the DTD family.</text>
</comment>
<reference key="1">
    <citation type="journal article" date="2008" name="Proc. Natl. Acad. Sci. U.S.A.">
        <title>The genome of Clostridium kluyveri, a strict anaerobe with unique metabolic features.</title>
        <authorList>
            <person name="Seedorf H."/>
            <person name="Fricke W.F."/>
            <person name="Veith B."/>
            <person name="Brueggemann H."/>
            <person name="Liesegang H."/>
            <person name="Strittmatter A."/>
            <person name="Miethke M."/>
            <person name="Buckel W."/>
            <person name="Hinderberger J."/>
            <person name="Li F."/>
            <person name="Hagemeier C."/>
            <person name="Thauer R.K."/>
            <person name="Gottschalk G."/>
        </authorList>
    </citation>
    <scope>NUCLEOTIDE SEQUENCE [LARGE SCALE GENOMIC DNA]</scope>
    <source>
        <strain>ATCC 8527 / DSM 555 / NBRC 12016 / NCIMB 10680 / K1</strain>
    </source>
</reference>
<dbReference type="EC" id="3.1.1.96" evidence="1"/>
<dbReference type="EMBL" id="CP000673">
    <property type="protein sequence ID" value="EDK35138.1"/>
    <property type="molecule type" value="Genomic_DNA"/>
</dbReference>
<dbReference type="RefSeq" id="WP_012103473.1">
    <property type="nucleotide sequence ID" value="NC_009706.1"/>
</dbReference>
<dbReference type="SMR" id="A5N1Z2"/>
<dbReference type="STRING" id="431943.CKL_3130"/>
<dbReference type="KEGG" id="ckl:CKL_3130"/>
<dbReference type="eggNOG" id="COG1490">
    <property type="taxonomic scope" value="Bacteria"/>
</dbReference>
<dbReference type="HOGENOM" id="CLU_076901_1_0_9"/>
<dbReference type="Proteomes" id="UP000002411">
    <property type="component" value="Chromosome"/>
</dbReference>
<dbReference type="GO" id="GO:0005737">
    <property type="term" value="C:cytoplasm"/>
    <property type="evidence" value="ECO:0007669"/>
    <property type="project" value="UniProtKB-SubCell"/>
</dbReference>
<dbReference type="GO" id="GO:0051500">
    <property type="term" value="F:D-tyrosyl-tRNA(Tyr) deacylase activity"/>
    <property type="evidence" value="ECO:0007669"/>
    <property type="project" value="TreeGrafter"/>
</dbReference>
<dbReference type="GO" id="GO:0106026">
    <property type="term" value="F:Gly-tRNA(Ala) deacylase activity"/>
    <property type="evidence" value="ECO:0007669"/>
    <property type="project" value="UniProtKB-UniRule"/>
</dbReference>
<dbReference type="GO" id="GO:0043908">
    <property type="term" value="F:Ser(Gly)-tRNA(Ala) hydrolase activity"/>
    <property type="evidence" value="ECO:0007669"/>
    <property type="project" value="UniProtKB-UniRule"/>
</dbReference>
<dbReference type="GO" id="GO:0000049">
    <property type="term" value="F:tRNA binding"/>
    <property type="evidence" value="ECO:0007669"/>
    <property type="project" value="UniProtKB-UniRule"/>
</dbReference>
<dbReference type="GO" id="GO:0019478">
    <property type="term" value="P:D-amino acid catabolic process"/>
    <property type="evidence" value="ECO:0007669"/>
    <property type="project" value="UniProtKB-UniRule"/>
</dbReference>
<dbReference type="CDD" id="cd00563">
    <property type="entry name" value="Dtyr_deacylase"/>
    <property type="match status" value="1"/>
</dbReference>
<dbReference type="FunFam" id="3.50.80.10:FF:000001">
    <property type="entry name" value="D-aminoacyl-tRNA deacylase"/>
    <property type="match status" value="1"/>
</dbReference>
<dbReference type="Gene3D" id="3.50.80.10">
    <property type="entry name" value="D-tyrosyl-tRNA(Tyr) deacylase"/>
    <property type="match status" value="1"/>
</dbReference>
<dbReference type="HAMAP" id="MF_00518">
    <property type="entry name" value="Deacylase_Dtd"/>
    <property type="match status" value="1"/>
</dbReference>
<dbReference type="InterPro" id="IPR003732">
    <property type="entry name" value="Daa-tRNA_deacyls_DTD"/>
</dbReference>
<dbReference type="InterPro" id="IPR023509">
    <property type="entry name" value="DTD-like_sf"/>
</dbReference>
<dbReference type="NCBIfam" id="TIGR00256">
    <property type="entry name" value="D-aminoacyl-tRNA deacylase"/>
    <property type="match status" value="1"/>
</dbReference>
<dbReference type="PANTHER" id="PTHR10472:SF5">
    <property type="entry name" value="D-AMINOACYL-TRNA DEACYLASE 1"/>
    <property type="match status" value="1"/>
</dbReference>
<dbReference type="PANTHER" id="PTHR10472">
    <property type="entry name" value="D-TYROSYL-TRNA TYR DEACYLASE"/>
    <property type="match status" value="1"/>
</dbReference>
<dbReference type="Pfam" id="PF02580">
    <property type="entry name" value="Tyr_Deacylase"/>
    <property type="match status" value="1"/>
</dbReference>
<dbReference type="SUPFAM" id="SSF69500">
    <property type="entry name" value="DTD-like"/>
    <property type="match status" value="1"/>
</dbReference>
<gene>
    <name evidence="1" type="primary">dtd</name>
    <name type="ordered locus">CKL_3130</name>
</gene>
<sequence length="149" mass="16710">MRAVVQRVKRSKVEVDGKIIGEIGKGLNVLLGISVEDKKEDISYMKDKILNLRIFEDEEGKLNKSLLDVQGELLIISQFTLYGDCRKGRRPSFIKALGGEKARSVYNEFIDQCKDSVHNVQTGEFGADMLVSIENDGPVTIMVDSEKIF</sequence>